<reference key="1">
    <citation type="journal article" date="2005" name="Genome Res.">
        <title>Comparative and functional genomic analyses of the pathogenicity of phytopathogen Xanthomonas campestris pv. campestris.</title>
        <authorList>
            <person name="Qian W."/>
            <person name="Jia Y."/>
            <person name="Ren S.-X."/>
            <person name="He Y.-Q."/>
            <person name="Feng J.-X."/>
            <person name="Lu L.-F."/>
            <person name="Sun Q."/>
            <person name="Ying G."/>
            <person name="Tang D.-J."/>
            <person name="Tang H."/>
            <person name="Wu W."/>
            <person name="Hao P."/>
            <person name="Wang L."/>
            <person name="Jiang B.-L."/>
            <person name="Zeng S."/>
            <person name="Gu W.-Y."/>
            <person name="Lu G."/>
            <person name="Rong L."/>
            <person name="Tian Y."/>
            <person name="Yao Z."/>
            <person name="Fu G."/>
            <person name="Chen B."/>
            <person name="Fang R."/>
            <person name="Qiang B."/>
            <person name="Chen Z."/>
            <person name="Zhao G.-P."/>
            <person name="Tang J.-L."/>
            <person name="He C."/>
        </authorList>
    </citation>
    <scope>NUCLEOTIDE SEQUENCE [LARGE SCALE GENOMIC DNA]</scope>
    <source>
        <strain>8004</strain>
    </source>
</reference>
<accession>Q4UQW3</accession>
<protein>
    <recommendedName>
        <fullName evidence="1">Ribosomal RNA small subunit methyltransferase H</fullName>
        <ecNumber evidence="1">2.1.1.199</ecNumber>
    </recommendedName>
    <alternativeName>
        <fullName evidence="1">16S rRNA m(4)C1402 methyltransferase</fullName>
    </alternativeName>
    <alternativeName>
        <fullName evidence="1">rRNA (cytosine-N(4)-)-methyltransferase RsmH</fullName>
    </alternativeName>
</protein>
<keyword id="KW-0963">Cytoplasm</keyword>
<keyword id="KW-0489">Methyltransferase</keyword>
<keyword id="KW-0698">rRNA processing</keyword>
<keyword id="KW-0949">S-adenosyl-L-methionine</keyword>
<keyword id="KW-0808">Transferase</keyword>
<proteinExistence type="inferred from homology"/>
<gene>
    <name evidence="1" type="primary">rsmH</name>
    <name type="synonym">mraW</name>
    <name type="ordered locus">XC_3517</name>
</gene>
<feature type="chain" id="PRO_0000223572" description="Ribosomal RNA small subunit methyltransferase H">
    <location>
        <begin position="1"/>
        <end position="342"/>
    </location>
</feature>
<feature type="region of interest" description="Disordered" evidence="2">
    <location>
        <begin position="309"/>
        <end position="342"/>
    </location>
</feature>
<feature type="compositionally biased region" description="Polar residues" evidence="2">
    <location>
        <begin position="333"/>
        <end position="342"/>
    </location>
</feature>
<feature type="binding site" evidence="1">
    <location>
        <begin position="36"/>
        <end position="38"/>
    </location>
    <ligand>
        <name>S-adenosyl-L-methionine</name>
        <dbReference type="ChEBI" id="CHEBI:59789"/>
    </ligand>
</feature>
<feature type="binding site" evidence="1">
    <location>
        <position position="56"/>
    </location>
    <ligand>
        <name>S-adenosyl-L-methionine</name>
        <dbReference type="ChEBI" id="CHEBI:59789"/>
    </ligand>
</feature>
<feature type="binding site" evidence="1">
    <location>
        <position position="82"/>
    </location>
    <ligand>
        <name>S-adenosyl-L-methionine</name>
        <dbReference type="ChEBI" id="CHEBI:59789"/>
    </ligand>
</feature>
<feature type="binding site" evidence="1">
    <location>
        <position position="100"/>
    </location>
    <ligand>
        <name>S-adenosyl-L-methionine</name>
        <dbReference type="ChEBI" id="CHEBI:59789"/>
    </ligand>
</feature>
<feature type="binding site" evidence="1">
    <location>
        <position position="107"/>
    </location>
    <ligand>
        <name>S-adenosyl-L-methionine</name>
        <dbReference type="ChEBI" id="CHEBI:59789"/>
    </ligand>
</feature>
<evidence type="ECO:0000255" key="1">
    <source>
        <dbReference type="HAMAP-Rule" id="MF_01007"/>
    </source>
</evidence>
<evidence type="ECO:0000256" key="2">
    <source>
        <dbReference type="SAM" id="MobiDB-lite"/>
    </source>
</evidence>
<organism>
    <name type="scientific">Xanthomonas campestris pv. campestris (strain 8004)</name>
    <dbReference type="NCBI Taxonomy" id="314565"/>
    <lineage>
        <taxon>Bacteria</taxon>
        <taxon>Pseudomonadati</taxon>
        <taxon>Pseudomonadota</taxon>
        <taxon>Gammaproteobacteria</taxon>
        <taxon>Lysobacterales</taxon>
        <taxon>Lysobacteraceae</taxon>
        <taxon>Xanthomonas</taxon>
    </lineage>
</organism>
<sequence length="342" mass="36433">MSQPPAAHVPVLYTQVLEGLQVTENGTYLDGTFGRGGHARGVLEHLGPGGRLLVMDKDPEAVAVSQHTFGGDARVSIHPGSFARLVQVVAAATVDGILLDLGVSSPQLDVAGRGFSFGKDGPLDMRMDPDSGQSAAGWLAQATDREIADVLWTYGEERQSRRIARAIVARRGEQPLLRTAQLADLIASVMPRGDSKTHPATRSFQAIRIHINRELADLEAGLDAALGALKPGGRLAVISFHSLEDRIVKQFMARYAKAPPSNRRLPEAQPFVPTLQLVSGAIKADDSELAVNPRARSAVLRVAEKLGMENRESGMGKGHGAAASRFPTPDSRFPTSPNGDAP</sequence>
<dbReference type="EC" id="2.1.1.199" evidence="1"/>
<dbReference type="EMBL" id="CP000050">
    <property type="protein sequence ID" value="AAY50560.1"/>
    <property type="molecule type" value="Genomic_DNA"/>
</dbReference>
<dbReference type="SMR" id="Q4UQW3"/>
<dbReference type="KEGG" id="xcb:XC_3517"/>
<dbReference type="HOGENOM" id="CLU_038422_2_0_6"/>
<dbReference type="Proteomes" id="UP000000420">
    <property type="component" value="Chromosome"/>
</dbReference>
<dbReference type="GO" id="GO:0005737">
    <property type="term" value="C:cytoplasm"/>
    <property type="evidence" value="ECO:0007669"/>
    <property type="project" value="UniProtKB-SubCell"/>
</dbReference>
<dbReference type="GO" id="GO:0071424">
    <property type="term" value="F:rRNA (cytosine-N4-)-methyltransferase activity"/>
    <property type="evidence" value="ECO:0007669"/>
    <property type="project" value="UniProtKB-UniRule"/>
</dbReference>
<dbReference type="GO" id="GO:0070475">
    <property type="term" value="P:rRNA base methylation"/>
    <property type="evidence" value="ECO:0007669"/>
    <property type="project" value="UniProtKB-UniRule"/>
</dbReference>
<dbReference type="FunFam" id="1.10.150.170:FF:000001">
    <property type="entry name" value="Ribosomal RNA small subunit methyltransferase H"/>
    <property type="match status" value="1"/>
</dbReference>
<dbReference type="Gene3D" id="1.10.150.170">
    <property type="entry name" value="Putative methyltransferase TM0872, insert domain"/>
    <property type="match status" value="1"/>
</dbReference>
<dbReference type="Gene3D" id="3.40.50.150">
    <property type="entry name" value="Vaccinia Virus protein VP39"/>
    <property type="match status" value="1"/>
</dbReference>
<dbReference type="HAMAP" id="MF_01007">
    <property type="entry name" value="16SrRNA_methyltr_H"/>
    <property type="match status" value="1"/>
</dbReference>
<dbReference type="InterPro" id="IPR002903">
    <property type="entry name" value="RsmH"/>
</dbReference>
<dbReference type="InterPro" id="IPR023397">
    <property type="entry name" value="SAM-dep_MeTrfase_MraW_recog"/>
</dbReference>
<dbReference type="InterPro" id="IPR029063">
    <property type="entry name" value="SAM-dependent_MTases_sf"/>
</dbReference>
<dbReference type="NCBIfam" id="TIGR00006">
    <property type="entry name" value="16S rRNA (cytosine(1402)-N(4))-methyltransferase RsmH"/>
    <property type="match status" value="1"/>
</dbReference>
<dbReference type="PANTHER" id="PTHR11265:SF0">
    <property type="entry name" value="12S RRNA N4-METHYLCYTIDINE METHYLTRANSFERASE"/>
    <property type="match status" value="1"/>
</dbReference>
<dbReference type="PANTHER" id="PTHR11265">
    <property type="entry name" value="S-ADENOSYL-METHYLTRANSFERASE MRAW"/>
    <property type="match status" value="1"/>
</dbReference>
<dbReference type="Pfam" id="PF01795">
    <property type="entry name" value="Methyltransf_5"/>
    <property type="match status" value="1"/>
</dbReference>
<dbReference type="PIRSF" id="PIRSF004486">
    <property type="entry name" value="MraW"/>
    <property type="match status" value="1"/>
</dbReference>
<dbReference type="SUPFAM" id="SSF81799">
    <property type="entry name" value="Putative methyltransferase TM0872, insert domain"/>
    <property type="match status" value="1"/>
</dbReference>
<dbReference type="SUPFAM" id="SSF53335">
    <property type="entry name" value="S-adenosyl-L-methionine-dependent methyltransferases"/>
    <property type="match status" value="1"/>
</dbReference>
<name>RSMH_XANC8</name>
<comment type="function">
    <text evidence="1">Specifically methylates the N4 position of cytidine in position 1402 (C1402) of 16S rRNA.</text>
</comment>
<comment type="catalytic activity">
    <reaction evidence="1">
        <text>cytidine(1402) in 16S rRNA + S-adenosyl-L-methionine = N(4)-methylcytidine(1402) in 16S rRNA + S-adenosyl-L-homocysteine + H(+)</text>
        <dbReference type="Rhea" id="RHEA:42928"/>
        <dbReference type="Rhea" id="RHEA-COMP:10286"/>
        <dbReference type="Rhea" id="RHEA-COMP:10287"/>
        <dbReference type="ChEBI" id="CHEBI:15378"/>
        <dbReference type="ChEBI" id="CHEBI:57856"/>
        <dbReference type="ChEBI" id="CHEBI:59789"/>
        <dbReference type="ChEBI" id="CHEBI:74506"/>
        <dbReference type="ChEBI" id="CHEBI:82748"/>
        <dbReference type="EC" id="2.1.1.199"/>
    </reaction>
</comment>
<comment type="subcellular location">
    <subcellularLocation>
        <location evidence="1">Cytoplasm</location>
    </subcellularLocation>
</comment>
<comment type="similarity">
    <text evidence="1">Belongs to the methyltransferase superfamily. RsmH family.</text>
</comment>